<comment type="function">
    <text evidence="2">Decapping enzyme that remove the protective 5'-cap from both host and viral mRNAs to commit transcripts for decay by the cellular exonuclease XRN1. Preferentially targets spliced mRNAs and since all viral genes are intronless, it preferentially targets host over viral transcripts. Acceleration of the turnover of cellular transcripts promotes the shutoff of host protein synthesis and therefore diminish the magnitude of antiviral response.</text>
</comment>
<comment type="cofactor">
    <cofactor evidence="2">
        <name>Mg(2+)</name>
        <dbReference type="ChEBI" id="CHEBI:18420"/>
    </cofactor>
    <cofactor evidence="2">
        <name>Mn(2+)</name>
        <dbReference type="ChEBI" id="CHEBI:29035"/>
    </cofactor>
</comment>
<comment type="subcellular location">
    <subcellularLocation>
        <location evidence="2">Host mitochondrion</location>
    </subcellularLocation>
    <text evidence="2">Mitochondria localization is required to efficiently decap mRNAs.</text>
</comment>
<comment type="induction">
    <text>Expressed in the late phase of the viral replicative cycle.</text>
</comment>
<comment type="similarity">
    <text evidence="4">Belongs to the Nudix hydrolase family.</text>
</comment>
<organism>
    <name type="scientific">Vaccinia virus (strain Copenhagen)</name>
    <name type="common">VACV</name>
    <dbReference type="NCBI Taxonomy" id="10249"/>
    <lineage>
        <taxon>Viruses</taxon>
        <taxon>Varidnaviria</taxon>
        <taxon>Bamfordvirae</taxon>
        <taxon>Nucleocytoviricota</taxon>
        <taxon>Pokkesviricetes</taxon>
        <taxon>Chitovirales</taxon>
        <taxon>Poxviridae</taxon>
        <taxon>Chordopoxvirinae</taxon>
        <taxon>Orthopoxvirus</taxon>
        <taxon>Vaccinia virus</taxon>
    </lineage>
</organism>
<evidence type="ECO:0000250" key="1"/>
<evidence type="ECO:0000250" key="2">
    <source>
        <dbReference type="UniProtKB" id="P04312"/>
    </source>
</evidence>
<evidence type="ECO:0000255" key="3">
    <source>
        <dbReference type="PROSITE-ProRule" id="PRU00794"/>
    </source>
</evidence>
<evidence type="ECO:0000305" key="4"/>
<reference key="1">
    <citation type="journal article" date="1990" name="Virology">
        <title>The complete DNA sequence of vaccinia virus.</title>
        <authorList>
            <person name="Goebel S.J."/>
            <person name="Johnson G.P."/>
            <person name="Perkus M.E."/>
            <person name="Davis S.W."/>
            <person name="Winslow J.P."/>
            <person name="Paoletti E."/>
        </authorList>
    </citation>
    <scope>NUCLEOTIDE SEQUENCE [LARGE SCALE GENOMIC DNA]</scope>
</reference>
<reference key="2">
    <citation type="journal article" date="1990" name="Virology">
        <title>Appendix to 'The complete DNA sequence of vaccinia virus'.</title>
        <authorList>
            <person name="Goebel S.J."/>
            <person name="Johnson G.P."/>
            <person name="Perkus M.E."/>
            <person name="Davis S.W."/>
            <person name="Winslow J.P."/>
            <person name="Paoletti E."/>
        </authorList>
    </citation>
    <scope>NUCLEOTIDE SEQUENCE [LARGE SCALE GENOMIC DNA]</scope>
</reference>
<organismHost>
    <name type="scientific">Homo sapiens</name>
    <name type="common">Human</name>
    <dbReference type="NCBI Taxonomy" id="9606"/>
</organismHost>
<proteinExistence type="evidence at transcript level"/>
<name>PG122_VACCC</name>
<sequence length="248" mass="28934">MNFYRSSIISQIIKYNRRLAKSIICEDDSQIITLTAFVNQCLWCHKRVSVSAILLTTDNKILVCNRRDSFLYSEIIRTRNMFRKKRLFLNYSNYLSKQERSILSSFFSLYPATADNDRIDAIYPGGIPKRGENVPECLSREIKEEVNIDNSFVFIDTRFFIHGIIEDTIINKFFEVIFFVGRISLTSDQIIDTFKSNHEIKDLIFLDPNSGNGLQYEIAKYALDTAKLKCYGHRGCYYESLKKLTEDD</sequence>
<dbReference type="EC" id="3.1.3.-"/>
<dbReference type="EMBL" id="M35027">
    <property type="protein sequence ID" value="AAA48109.1"/>
    <property type="molecule type" value="Genomic_DNA"/>
</dbReference>
<dbReference type="PIR" id="I42515">
    <property type="entry name" value="I42515"/>
</dbReference>
<dbReference type="SMR" id="P21012"/>
<dbReference type="Proteomes" id="UP000008269">
    <property type="component" value="Segment"/>
</dbReference>
<dbReference type="GO" id="GO:0033650">
    <property type="term" value="C:host cell mitochondrion"/>
    <property type="evidence" value="ECO:0007669"/>
    <property type="project" value="UniProtKB-SubCell"/>
</dbReference>
<dbReference type="GO" id="GO:0046872">
    <property type="term" value="F:metal ion binding"/>
    <property type="evidence" value="ECO:0007669"/>
    <property type="project" value="UniProtKB-KW"/>
</dbReference>
<dbReference type="GO" id="GO:0016791">
    <property type="term" value="F:phosphatase activity"/>
    <property type="evidence" value="ECO:0007669"/>
    <property type="project" value="InterPro"/>
</dbReference>
<dbReference type="Gene3D" id="3.90.79.10">
    <property type="entry name" value="Nucleoside Triphosphate Pyrophosphohydrolase"/>
    <property type="match status" value="1"/>
</dbReference>
<dbReference type="InterPro" id="IPR015797">
    <property type="entry name" value="NUDIX_hydrolase-like_dom_sf"/>
</dbReference>
<dbReference type="InterPro" id="IPR020084">
    <property type="entry name" value="NUDIX_hydrolase_CS"/>
</dbReference>
<dbReference type="InterPro" id="IPR000086">
    <property type="entry name" value="NUDIX_hydrolase_dom"/>
</dbReference>
<dbReference type="InterPro" id="IPR003301">
    <property type="entry name" value="Vaccinia_D10_decapping"/>
</dbReference>
<dbReference type="InterPro" id="IPR013683">
    <property type="entry name" value="Vaccinia_D10_N"/>
</dbReference>
<dbReference type="Pfam" id="PF00293">
    <property type="entry name" value="NUDIX"/>
    <property type="match status" value="1"/>
</dbReference>
<dbReference type="Pfam" id="PF08476">
    <property type="entry name" value="VD10_N"/>
    <property type="match status" value="1"/>
</dbReference>
<dbReference type="PRINTS" id="PR01364">
    <property type="entry name" value="VD10PROTEIN"/>
</dbReference>
<dbReference type="SUPFAM" id="SSF55811">
    <property type="entry name" value="Nudix"/>
    <property type="match status" value="1"/>
</dbReference>
<dbReference type="PROSITE" id="PS51462">
    <property type="entry name" value="NUDIX"/>
    <property type="match status" value="1"/>
</dbReference>
<dbReference type="PROSITE" id="PS00893">
    <property type="entry name" value="NUDIX_BOX"/>
    <property type="match status" value="1"/>
</dbReference>
<gene>
    <name type="primary">OPG122</name>
    <name type="ORF">D10R</name>
</gene>
<feature type="chain" id="PRO_0000057097" description="mRNA-decapping protein OPG122">
    <location>
        <begin position="1"/>
        <end position="248"/>
    </location>
</feature>
<feature type="domain" description="Nudix hydrolase" evidence="3">
    <location>
        <begin position="45"/>
        <end position="227"/>
    </location>
</feature>
<feature type="short sequence motif" description="Nudix box" evidence="3">
    <location>
        <begin position="126"/>
        <end position="147"/>
    </location>
</feature>
<feature type="active site" description="Nucleophile" evidence="1">
    <location>
        <position position="141"/>
    </location>
</feature>
<feature type="binding site" evidence="1">
    <location>
        <position position="132"/>
    </location>
    <ligand>
        <name>Mg(2+)</name>
        <dbReference type="ChEBI" id="CHEBI:18420"/>
    </ligand>
</feature>
<feature type="binding site" evidence="1">
    <location>
        <position position="145"/>
    </location>
    <ligand>
        <name>Mn(2+)</name>
        <dbReference type="ChEBI" id="CHEBI:29035"/>
    </ligand>
</feature>
<feature type="binding site" evidence="1">
    <location>
        <position position="167"/>
    </location>
    <ligand>
        <name>Mg(2+)</name>
        <dbReference type="ChEBI" id="CHEBI:18420"/>
    </ligand>
</feature>
<protein>
    <recommendedName>
        <fullName>mRNA-decapping protein OPG122</fullName>
        <ecNumber>3.1.3.-</ecNumber>
    </recommendedName>
</protein>
<accession>P21012</accession>
<keyword id="KW-1045">Host mitochondrion</keyword>
<keyword id="KW-0378">Hydrolase</keyword>
<keyword id="KW-0460">Magnesium</keyword>
<keyword id="KW-0464">Manganese</keyword>
<keyword id="KW-0479">Metal-binding</keyword>
<keyword id="KW-1185">Reference proteome</keyword>